<proteinExistence type="inferred from homology"/>
<gene>
    <name type="ordered locus">YGL260W</name>
    <name type="ORF">NRB76</name>
</gene>
<comment type="similarity">
    <text evidence="1">Belongs to the UPF0377 family.</text>
</comment>
<feature type="chain" id="PRO_0000202703" description="Putative UPF0377 protein YGL260W">
    <location>
        <begin position="1"/>
        <end position="76"/>
    </location>
</feature>
<keyword id="KW-1185">Reference proteome</keyword>
<organism>
    <name type="scientific">Saccharomyces cerevisiae (strain ATCC 204508 / S288c)</name>
    <name type="common">Baker's yeast</name>
    <dbReference type="NCBI Taxonomy" id="559292"/>
    <lineage>
        <taxon>Eukaryota</taxon>
        <taxon>Fungi</taxon>
        <taxon>Dikarya</taxon>
        <taxon>Ascomycota</taxon>
        <taxon>Saccharomycotina</taxon>
        <taxon>Saccharomycetes</taxon>
        <taxon>Saccharomycetales</taxon>
        <taxon>Saccharomycetaceae</taxon>
        <taxon>Saccharomyces</taxon>
    </lineage>
</organism>
<protein>
    <recommendedName>
        <fullName>Putative UPF0377 protein YGL260W</fullName>
    </recommendedName>
</protein>
<dbReference type="EMBL" id="X94357">
    <property type="protein sequence ID" value="CAA64127.1"/>
    <property type="molecule type" value="Genomic_DNA"/>
</dbReference>
<dbReference type="EMBL" id="Z72782">
    <property type="protein sequence ID" value="CAA96980.1"/>
    <property type="molecule type" value="Genomic_DNA"/>
</dbReference>
<dbReference type="EMBL" id="AY693264">
    <property type="protein sequence ID" value="AAT93283.1"/>
    <property type="molecule type" value="Genomic_DNA"/>
</dbReference>
<dbReference type="EMBL" id="BK006941">
    <property type="protein sequence ID" value="DAA07858.1"/>
    <property type="molecule type" value="Genomic_DNA"/>
</dbReference>
<dbReference type="PIR" id="S61601">
    <property type="entry name" value="S61601"/>
</dbReference>
<dbReference type="RefSeq" id="NP_011254.1">
    <property type="nucleotide sequence ID" value="NM_001181126.1"/>
</dbReference>
<dbReference type="BioGRID" id="300573">
    <property type="interactions" value="14"/>
</dbReference>
<dbReference type="FunCoup" id="P53056">
    <property type="interactions" value="16"/>
</dbReference>
<dbReference type="STRING" id="4932.YGL260W"/>
<dbReference type="PaxDb" id="4932-YGL260W"/>
<dbReference type="EnsemblFungi" id="YGL260W_mRNA">
    <property type="protein sequence ID" value="YGL260W"/>
    <property type="gene ID" value="YGL260W"/>
</dbReference>
<dbReference type="GeneID" id="852631"/>
<dbReference type="KEGG" id="sce:YGL260W"/>
<dbReference type="AGR" id="SGD:S000003229"/>
<dbReference type="SGD" id="S000003229">
    <property type="gene designation" value="YGL260W"/>
</dbReference>
<dbReference type="VEuPathDB" id="FungiDB:YGL260W"/>
<dbReference type="GeneTree" id="ENSGT00940000177730"/>
<dbReference type="HOGENOM" id="CLU_173518_0_0_1"/>
<dbReference type="InParanoid" id="P53056"/>
<dbReference type="OrthoDB" id="10269600at2759"/>
<dbReference type="BioCyc" id="YEAST:G3O-30728-MONOMER"/>
<dbReference type="PRO" id="PR:P53056"/>
<dbReference type="Proteomes" id="UP000002311">
    <property type="component" value="Chromosome VII"/>
</dbReference>
<dbReference type="RNAct" id="P53056">
    <property type="molecule type" value="protein"/>
</dbReference>
<reference key="1">
    <citation type="journal article" date="1996" name="Yeast">
        <title>Sequence of a 39,411 bp DNA fragment covering the left end of chromosome VII of Saccharomyces cerevisiae.</title>
        <authorList>
            <person name="Coissac E."/>
            <person name="Maillier E."/>
            <person name="Robineau S."/>
            <person name="Netter P."/>
        </authorList>
    </citation>
    <scope>NUCLEOTIDE SEQUENCE [GENOMIC DNA]</scope>
    <source>
        <strain>ATCC 96604 / S288c / FY1679</strain>
    </source>
</reference>
<reference key="2">
    <citation type="journal article" date="1997" name="Nature">
        <title>The nucleotide sequence of Saccharomyces cerevisiae chromosome VII.</title>
        <authorList>
            <person name="Tettelin H."/>
            <person name="Agostoni-Carbone M.L."/>
            <person name="Albermann K."/>
            <person name="Albers M."/>
            <person name="Arroyo J."/>
            <person name="Backes U."/>
            <person name="Barreiros T."/>
            <person name="Bertani I."/>
            <person name="Bjourson A.J."/>
            <person name="Brueckner M."/>
            <person name="Bruschi C.V."/>
            <person name="Carignani G."/>
            <person name="Castagnoli L."/>
            <person name="Cerdan E."/>
            <person name="Clemente M.L."/>
            <person name="Coblenz A."/>
            <person name="Coglievina M."/>
            <person name="Coissac E."/>
            <person name="Defoor E."/>
            <person name="Del Bino S."/>
            <person name="Delius H."/>
            <person name="Delneri D."/>
            <person name="de Wergifosse P."/>
            <person name="Dujon B."/>
            <person name="Durand P."/>
            <person name="Entian K.-D."/>
            <person name="Eraso P."/>
            <person name="Escribano V."/>
            <person name="Fabiani L."/>
            <person name="Fartmann B."/>
            <person name="Feroli F."/>
            <person name="Feuermann M."/>
            <person name="Frontali L."/>
            <person name="Garcia-Gonzalez M."/>
            <person name="Garcia-Saez M.I."/>
            <person name="Goffeau A."/>
            <person name="Guerreiro P."/>
            <person name="Hani J."/>
            <person name="Hansen M."/>
            <person name="Hebling U."/>
            <person name="Hernandez K."/>
            <person name="Heumann K."/>
            <person name="Hilger F."/>
            <person name="Hofmann B."/>
            <person name="Indge K.J."/>
            <person name="James C.M."/>
            <person name="Klima R."/>
            <person name="Koetter P."/>
            <person name="Kramer B."/>
            <person name="Kramer W."/>
            <person name="Lauquin G."/>
            <person name="Leuther H."/>
            <person name="Louis E.J."/>
            <person name="Maillier E."/>
            <person name="Marconi A."/>
            <person name="Martegani E."/>
            <person name="Mazon M.J."/>
            <person name="Mazzoni C."/>
            <person name="McReynolds A.D.K."/>
            <person name="Melchioretto P."/>
            <person name="Mewes H.-W."/>
            <person name="Minenkova O."/>
            <person name="Mueller-Auer S."/>
            <person name="Nawrocki A."/>
            <person name="Netter P."/>
            <person name="Neu R."/>
            <person name="Nombela C."/>
            <person name="Oliver S.G."/>
            <person name="Panzeri L."/>
            <person name="Paoluzi S."/>
            <person name="Plevani P."/>
            <person name="Portetelle D."/>
            <person name="Portillo F."/>
            <person name="Potier S."/>
            <person name="Purnelle B."/>
            <person name="Rieger M."/>
            <person name="Riles L."/>
            <person name="Rinaldi T."/>
            <person name="Robben J."/>
            <person name="Rodrigues-Pousada C."/>
            <person name="Rodriguez-Belmonte E."/>
            <person name="Rodriguez-Torres A.M."/>
            <person name="Rose M."/>
            <person name="Ruzzi M."/>
            <person name="Saliola M."/>
            <person name="Sanchez-Perez M."/>
            <person name="Schaefer B."/>
            <person name="Schaefer M."/>
            <person name="Scharfe M."/>
            <person name="Schmidheini T."/>
            <person name="Schreer A."/>
            <person name="Skala J."/>
            <person name="Souciet J.-L."/>
            <person name="Steensma H.Y."/>
            <person name="Talla E."/>
            <person name="Thierry A."/>
            <person name="Vandenbol M."/>
            <person name="van der Aart Q.J.M."/>
            <person name="Van Dyck L."/>
            <person name="Vanoni M."/>
            <person name="Verhasselt P."/>
            <person name="Voet M."/>
            <person name="Volckaert G."/>
            <person name="Wambutt R."/>
            <person name="Watson M.D."/>
            <person name="Weber N."/>
            <person name="Wedler E."/>
            <person name="Wedler H."/>
            <person name="Wipfli P."/>
            <person name="Wolf K."/>
            <person name="Wright L.F."/>
            <person name="Zaccaria P."/>
            <person name="Zimmermann M."/>
            <person name="Zollner A."/>
            <person name="Kleine K."/>
        </authorList>
    </citation>
    <scope>NUCLEOTIDE SEQUENCE [LARGE SCALE GENOMIC DNA]</scope>
    <source>
        <strain>ATCC 204508 / S288c</strain>
    </source>
</reference>
<reference key="3">
    <citation type="journal article" date="2014" name="G3 (Bethesda)">
        <title>The reference genome sequence of Saccharomyces cerevisiae: Then and now.</title>
        <authorList>
            <person name="Engel S.R."/>
            <person name="Dietrich F.S."/>
            <person name="Fisk D.G."/>
            <person name="Binkley G."/>
            <person name="Balakrishnan R."/>
            <person name="Costanzo M.C."/>
            <person name="Dwight S.S."/>
            <person name="Hitz B.C."/>
            <person name="Karra K."/>
            <person name="Nash R.S."/>
            <person name="Weng S."/>
            <person name="Wong E.D."/>
            <person name="Lloyd P."/>
            <person name="Skrzypek M.S."/>
            <person name="Miyasato S.R."/>
            <person name="Simison M."/>
            <person name="Cherry J.M."/>
        </authorList>
    </citation>
    <scope>GENOME REANNOTATION</scope>
    <source>
        <strain>ATCC 204508 / S288c</strain>
    </source>
</reference>
<reference key="4">
    <citation type="journal article" date="2007" name="Genome Res.">
        <title>Approaching a complete repository of sequence-verified protein-encoding clones for Saccharomyces cerevisiae.</title>
        <authorList>
            <person name="Hu Y."/>
            <person name="Rolfs A."/>
            <person name="Bhullar B."/>
            <person name="Murthy T.V.S."/>
            <person name="Zhu C."/>
            <person name="Berger M.F."/>
            <person name="Camargo A.A."/>
            <person name="Kelley F."/>
            <person name="McCarron S."/>
            <person name="Jepson D."/>
            <person name="Richardson A."/>
            <person name="Raphael J."/>
            <person name="Moreira D."/>
            <person name="Taycher E."/>
            <person name="Zuo D."/>
            <person name="Mohr S."/>
            <person name="Kane M.F."/>
            <person name="Williamson J."/>
            <person name="Simpson A.J.G."/>
            <person name="Bulyk M.L."/>
            <person name="Harlow E."/>
            <person name="Marsischky G."/>
            <person name="Kolodner R.D."/>
            <person name="LaBaer J."/>
        </authorList>
    </citation>
    <scope>NUCLEOTIDE SEQUENCE [GENOMIC DNA]</scope>
    <source>
        <strain>ATCC 204508 / S288c</strain>
    </source>
</reference>
<sequence>MEMLLFLNESYIFHRLRMWSIVLWHSCVFVCAECGNANYRVPRCLIKPFSVPVTFPFSVKKNIRILDLDPRTEAYC</sequence>
<evidence type="ECO:0000305" key="1"/>
<accession>P53056</accession>
<accession>D6VV74</accession>
<name>YGZE_YEAST</name>